<feature type="chain" id="PRO_0000404232" description="Non-structural protein 4">
    <location>
        <begin position="1"/>
        <end position="180"/>
    </location>
</feature>
<feature type="transmembrane region" description="Helical" evidence="1">
    <location>
        <begin position="16"/>
        <end position="36"/>
    </location>
</feature>
<feature type="transmembrane region" description="Helical" evidence="1">
    <location>
        <begin position="52"/>
        <end position="72"/>
    </location>
</feature>
<organism>
    <name type="scientific">Banna virus</name>
    <name type="common">BAV</name>
    <dbReference type="NCBI Taxonomy" id="77763"/>
    <lineage>
        <taxon>Viruses</taxon>
        <taxon>Riboviria</taxon>
        <taxon>Orthornavirae</taxon>
        <taxon>Duplornaviricota</taxon>
        <taxon>Resentoviricetes</taxon>
        <taxon>Reovirales</taxon>
        <taxon>Sedoreoviridae</taxon>
        <taxon>Seadornavirus</taxon>
        <taxon>Seadornavirus bannaense</taxon>
    </lineage>
</organism>
<protein>
    <recommendedName>
        <fullName>Non-structural protein 4</fullName>
        <shortName>NS4</shortName>
    </recommendedName>
    <alternativeName>
        <fullName>VP11</fullName>
    </alternativeName>
</protein>
<evidence type="ECO:0000255" key="1"/>
<evidence type="ECO:0000305" key="2"/>
<keyword id="KW-1043">Host membrane</keyword>
<keyword id="KW-0472">Membrane</keyword>
<keyword id="KW-1185">Reference proteome</keyword>
<keyword id="KW-0812">Transmembrane</keyword>
<keyword id="KW-1133">Transmembrane helix</keyword>
<comment type="subcellular location">
    <subcellularLocation>
        <location evidence="2">Host membrane</location>
        <topology evidence="2">Multi-pass membrane protein</topology>
    </subcellularLocation>
</comment>
<accession>Q9YWQ3</accession>
<name>NS4_BANNV</name>
<proteinExistence type="predicted"/>
<reference key="1">
    <citation type="journal article" date="1998" name="J. Gen. Virol.">
        <title>Comparative sequence analysis of American, European and Asian isolates of viruses in the genus Coltivirus.</title>
        <authorList>
            <person name="Attoui H."/>
            <person name="Charrel R.N."/>
            <person name="Billoir F."/>
            <person name="Cantaloube J.F."/>
            <person name="de Micco P."/>
            <person name="de Lamballerie X."/>
        </authorList>
    </citation>
    <scope>NUCLEOTIDE SEQUENCE [GENOMIC RNA]</scope>
    <source>
        <strain>JKT-6423</strain>
    </source>
</reference>
<dbReference type="EMBL" id="AF052014">
    <property type="protein sequence ID" value="AAC72041.1"/>
    <property type="molecule type" value="Genomic_RNA"/>
</dbReference>
<dbReference type="RefSeq" id="NP_694458.1">
    <property type="nucleotide sequence ID" value="NC_004200.1"/>
</dbReference>
<dbReference type="IntAct" id="Q9YWQ3">
    <property type="interactions" value="4"/>
</dbReference>
<dbReference type="KEGG" id="vg:995342"/>
<dbReference type="Proteomes" id="UP000000832">
    <property type="component" value="Genome"/>
</dbReference>
<dbReference type="GO" id="GO:0033644">
    <property type="term" value="C:host cell membrane"/>
    <property type="evidence" value="ECO:0007669"/>
    <property type="project" value="UniProtKB-SubCell"/>
</dbReference>
<dbReference type="GO" id="GO:0016020">
    <property type="term" value="C:membrane"/>
    <property type="evidence" value="ECO:0007669"/>
    <property type="project" value="UniProtKB-KW"/>
</dbReference>
<dbReference type="InterPro" id="IPR026378">
    <property type="entry name" value="Seadorna_VP11"/>
</dbReference>
<dbReference type="NCBIfam" id="TIGR04230">
    <property type="entry name" value="seadorna_VP11"/>
    <property type="match status" value="1"/>
</dbReference>
<gene>
    <name type="primary">Segment-11</name>
    <name type="synonym">S11</name>
</gene>
<sequence length="180" mass="20606">MTIQVQNLNCCPGRFVCVHKMTLLIILIISAAVTVIDQLYQKLPYDEQTKYIVSTITDGINATIISVMAILGLNNLNRVRYSKLDENGVYSQEMVTMNVQSDAANNKKQLKKKENEDVDEEKGLYPNLKLTEPTAPMIHNYMYDHKTQQAYLLTEHQIEQIKQNSVDPNNTPKIEVRSQF</sequence>